<dbReference type="EC" id="3.1.-.-" evidence="1"/>
<dbReference type="EMBL" id="CP001025">
    <property type="protein sequence ID" value="ACB63251.1"/>
    <property type="molecule type" value="Genomic_DNA"/>
</dbReference>
<dbReference type="SMR" id="B1YU28"/>
<dbReference type="KEGG" id="bac:BamMC406_0755"/>
<dbReference type="HOGENOM" id="CLU_098240_3_0_4"/>
<dbReference type="OrthoDB" id="9796140at2"/>
<dbReference type="Proteomes" id="UP000001680">
    <property type="component" value="Chromosome 1"/>
</dbReference>
<dbReference type="GO" id="GO:0005829">
    <property type="term" value="C:cytosol"/>
    <property type="evidence" value="ECO:0007669"/>
    <property type="project" value="TreeGrafter"/>
</dbReference>
<dbReference type="GO" id="GO:0004518">
    <property type="term" value="F:nuclease activity"/>
    <property type="evidence" value="ECO:0007669"/>
    <property type="project" value="UniProtKB-KW"/>
</dbReference>
<dbReference type="GO" id="GO:0000967">
    <property type="term" value="P:rRNA 5'-end processing"/>
    <property type="evidence" value="ECO:0007669"/>
    <property type="project" value="UniProtKB-UniRule"/>
</dbReference>
<dbReference type="CDD" id="cd16964">
    <property type="entry name" value="YqgF"/>
    <property type="match status" value="1"/>
</dbReference>
<dbReference type="Gene3D" id="3.30.420.140">
    <property type="entry name" value="YqgF/RNase H-like domain"/>
    <property type="match status" value="1"/>
</dbReference>
<dbReference type="HAMAP" id="MF_00651">
    <property type="entry name" value="Nuclease_YqgF"/>
    <property type="match status" value="1"/>
</dbReference>
<dbReference type="InterPro" id="IPR012337">
    <property type="entry name" value="RNaseH-like_sf"/>
</dbReference>
<dbReference type="InterPro" id="IPR005227">
    <property type="entry name" value="YqgF"/>
</dbReference>
<dbReference type="InterPro" id="IPR006641">
    <property type="entry name" value="YqgF/RNaseH-like_dom"/>
</dbReference>
<dbReference type="InterPro" id="IPR037027">
    <property type="entry name" value="YqgF/RNaseH-like_dom_sf"/>
</dbReference>
<dbReference type="NCBIfam" id="TIGR00250">
    <property type="entry name" value="RNAse_H_YqgF"/>
    <property type="match status" value="1"/>
</dbReference>
<dbReference type="PANTHER" id="PTHR33317">
    <property type="entry name" value="POLYNUCLEOTIDYL TRANSFERASE, RIBONUCLEASE H-LIKE SUPERFAMILY PROTEIN"/>
    <property type="match status" value="1"/>
</dbReference>
<dbReference type="PANTHER" id="PTHR33317:SF4">
    <property type="entry name" value="POLYNUCLEOTIDYL TRANSFERASE, RIBONUCLEASE H-LIKE SUPERFAMILY PROTEIN"/>
    <property type="match status" value="1"/>
</dbReference>
<dbReference type="Pfam" id="PF03652">
    <property type="entry name" value="RuvX"/>
    <property type="match status" value="1"/>
</dbReference>
<dbReference type="SMART" id="SM00732">
    <property type="entry name" value="YqgFc"/>
    <property type="match status" value="1"/>
</dbReference>
<dbReference type="SUPFAM" id="SSF53098">
    <property type="entry name" value="Ribonuclease H-like"/>
    <property type="match status" value="1"/>
</dbReference>
<organism>
    <name type="scientific">Burkholderia ambifaria (strain MC40-6)</name>
    <dbReference type="NCBI Taxonomy" id="398577"/>
    <lineage>
        <taxon>Bacteria</taxon>
        <taxon>Pseudomonadati</taxon>
        <taxon>Pseudomonadota</taxon>
        <taxon>Betaproteobacteria</taxon>
        <taxon>Burkholderiales</taxon>
        <taxon>Burkholderiaceae</taxon>
        <taxon>Burkholderia</taxon>
        <taxon>Burkholderia cepacia complex</taxon>
    </lineage>
</organism>
<sequence length="149" mass="16595">MSGASARDATLLGFDYGEKRIGVAIGNALTRSARALVVIPNLNREHRFKAVGDLLAEWRPDALVVGLPMHPDGTPHEMTQQAKRFGNQLNGRFGLPVTWVDERYSSVEAEAGLRERNVRGRARAEMLDAEAARVILQQYLDQLSDHEHH</sequence>
<comment type="function">
    <text evidence="1">Could be a nuclease involved in processing of the 5'-end of pre-16S rRNA.</text>
</comment>
<comment type="subcellular location">
    <subcellularLocation>
        <location evidence="1">Cytoplasm</location>
    </subcellularLocation>
</comment>
<comment type="similarity">
    <text evidence="1">Belongs to the YqgF nuclease family.</text>
</comment>
<feature type="chain" id="PRO_1000131004" description="Putative pre-16S rRNA nuclease">
    <location>
        <begin position="1"/>
        <end position="149"/>
    </location>
</feature>
<evidence type="ECO:0000255" key="1">
    <source>
        <dbReference type="HAMAP-Rule" id="MF_00651"/>
    </source>
</evidence>
<reference key="1">
    <citation type="submission" date="2008-04" db="EMBL/GenBank/DDBJ databases">
        <title>Complete sequence of chromosome 1 of Burkholderia ambifaria MC40-6.</title>
        <authorList>
            <person name="Copeland A."/>
            <person name="Lucas S."/>
            <person name="Lapidus A."/>
            <person name="Glavina del Rio T."/>
            <person name="Dalin E."/>
            <person name="Tice H."/>
            <person name="Pitluck S."/>
            <person name="Chain P."/>
            <person name="Malfatti S."/>
            <person name="Shin M."/>
            <person name="Vergez L."/>
            <person name="Lang D."/>
            <person name="Schmutz J."/>
            <person name="Larimer F."/>
            <person name="Land M."/>
            <person name="Hauser L."/>
            <person name="Kyrpides N."/>
            <person name="Lykidis A."/>
            <person name="Ramette A."/>
            <person name="Konstantinidis K."/>
            <person name="Tiedje J."/>
            <person name="Richardson P."/>
        </authorList>
    </citation>
    <scope>NUCLEOTIDE SEQUENCE [LARGE SCALE GENOMIC DNA]</scope>
    <source>
        <strain>MC40-6</strain>
    </source>
</reference>
<keyword id="KW-0963">Cytoplasm</keyword>
<keyword id="KW-0378">Hydrolase</keyword>
<keyword id="KW-0540">Nuclease</keyword>
<keyword id="KW-0690">Ribosome biogenesis</keyword>
<accession>B1YU28</accession>
<name>YQGF_BURA4</name>
<protein>
    <recommendedName>
        <fullName evidence="1">Putative pre-16S rRNA nuclease</fullName>
        <ecNumber evidence="1">3.1.-.-</ecNumber>
    </recommendedName>
</protein>
<gene>
    <name type="ordered locus">BamMC406_0755</name>
</gene>
<proteinExistence type="inferred from homology"/>